<evidence type="ECO:0000256" key="1">
    <source>
        <dbReference type="SAM" id="MobiDB-lite"/>
    </source>
</evidence>
<evidence type="ECO:0000269" key="2">
    <source>
    </source>
</evidence>
<dbReference type="EMBL" id="U18466">
    <property type="protein sequence ID" value="AIU95047.1"/>
    <property type="molecule type" value="Genomic_DNA"/>
</dbReference>
<dbReference type="RefSeq" id="YP_009094905.1">
    <property type="nucleotide sequence ID" value="NC_001659.2"/>
</dbReference>
<dbReference type="GeneID" id="22220396"/>
<dbReference type="KEGG" id="vg:22220396"/>
<dbReference type="Proteomes" id="UP000000624">
    <property type="component" value="Segment"/>
</dbReference>
<feature type="chain" id="PRO_0000444975" description="Uncharacterized protein L57L">
    <location>
        <begin position="1"/>
        <end position="57"/>
    </location>
</feature>
<feature type="region of interest" description="Disordered" evidence="1">
    <location>
        <begin position="1"/>
        <end position="57"/>
    </location>
</feature>
<feature type="compositionally biased region" description="Polar residues" evidence="1">
    <location>
        <begin position="23"/>
        <end position="57"/>
    </location>
</feature>
<organismHost>
    <name type="scientific">Ornithodoros</name>
    <name type="common">relapsing fever ticks</name>
    <dbReference type="NCBI Taxonomy" id="6937"/>
</organismHost>
<organismHost>
    <name type="scientific">Sus scrofa</name>
    <name type="common">Pig</name>
    <dbReference type="NCBI Taxonomy" id="9823"/>
</organismHost>
<name>L57L_ASFB7</name>
<comment type="induction">
    <text evidence="2">Expressed in the late phase of the viral replicative cycle.</text>
</comment>
<reference key="1">
    <citation type="journal article" date="1995" name="Virology">
        <title>Analysis of the complete nucleotide sequence of African swine fever virus.</title>
        <authorList>
            <person name="Yanez R.J."/>
            <person name="Rodriguez J.M."/>
            <person name="Nogal M.L."/>
            <person name="Yuste L."/>
            <person name="Enriquez C."/>
            <person name="Rodriguez J.F."/>
            <person name="Vinuela E."/>
        </authorList>
    </citation>
    <scope>NUCLEOTIDE SEQUENCE [LARGE SCALE GENOMIC DNA]</scope>
</reference>
<reference key="2">
    <citation type="journal article" date="2020" name="Biochem. Soc. Trans.">
        <title>Transcriptome view of a killer: African swine fever virus.</title>
        <authorList>
            <person name="Cackett G."/>
            <person name="Sykora M."/>
            <person name="Werner F."/>
        </authorList>
    </citation>
    <scope>REVIEW</scope>
</reference>
<reference key="3">
    <citation type="journal article" date="2020" name="J. Virol.">
        <title>The African Swine Fever Virus Transcriptome.</title>
        <authorList>
            <person name="Cackett G."/>
            <person name="Matelska D."/>
            <person name="Sykora M."/>
            <person name="Portugal R."/>
            <person name="Malecki M."/>
            <person name="Baehler J."/>
            <person name="Dixon L."/>
            <person name="Werner F."/>
        </authorList>
    </citation>
    <scope>INDUCTION</scope>
</reference>
<organism>
    <name type="scientific">African swine fever virus (strain Badajoz 1971 Vero-adapted)</name>
    <name type="common">Ba71V</name>
    <name type="synonym">ASFV</name>
    <dbReference type="NCBI Taxonomy" id="10498"/>
    <lineage>
        <taxon>Viruses</taxon>
        <taxon>Varidnaviria</taxon>
        <taxon>Bamfordvirae</taxon>
        <taxon>Nucleocytoviricota</taxon>
        <taxon>Pokkesviricetes</taxon>
        <taxon>Asfuvirales</taxon>
        <taxon>Asfarviridae</taxon>
        <taxon>Asfivirus</taxon>
        <taxon>African swine fever virus</taxon>
    </lineage>
</organism>
<proteinExistence type="evidence at transcript level"/>
<accession>A0A097SRV6</accession>
<keyword id="KW-1185">Reference proteome</keyword>
<gene>
    <name type="primary">L57L</name>
</gene>
<sequence>MDDTLPKQMTPTDTSPLKEEQAHCNNKTLENQPKNINDNKCTDSQNTDLQNTEPSKV</sequence>
<protein>
    <recommendedName>
        <fullName>Uncharacterized protein L57L</fullName>
    </recommendedName>
</protein>